<reference key="1">
    <citation type="submission" date="2006-01" db="EMBL/GenBank/DDBJ databases">
        <authorList>
            <consortium name="NIH - Mammalian Gene Collection (MGC) project"/>
        </authorList>
    </citation>
    <scope>NUCLEOTIDE SEQUENCE [LARGE SCALE MRNA]</scope>
    <source>
        <strain>Hereford</strain>
        <tissue>Testis</tissue>
    </source>
</reference>
<gene>
    <name type="primary">FUCA1</name>
</gene>
<comment type="function">
    <text evidence="1">Alpha-L-fucosidase is responsible for hydrolyzing the alpha-1,6-linked fucose joined to the reducing-end N-acetylglucosamine of the carbohydrate moieties of glycoproteins.</text>
</comment>
<comment type="catalytic activity">
    <reaction evidence="4">
        <text>an alpha-L-fucoside + H2O = L-fucose + an alcohol</text>
        <dbReference type="Rhea" id="RHEA:12288"/>
        <dbReference type="ChEBI" id="CHEBI:2181"/>
        <dbReference type="ChEBI" id="CHEBI:15377"/>
        <dbReference type="ChEBI" id="CHEBI:28349"/>
        <dbReference type="ChEBI" id="CHEBI:30879"/>
        <dbReference type="EC" id="3.2.1.51"/>
    </reaction>
</comment>
<comment type="catalytic activity">
    <reaction evidence="2">
        <text>a neolactoside IV(2)-alpha-Fuc-nLc4Cer(d18:1(4E)) + H2O = a neolactoside nLc4Cer(d18:1(4E)) + L-fucose</text>
        <dbReference type="Rhea" id="RHEA:48224"/>
        <dbReference type="ChEBI" id="CHEBI:2181"/>
        <dbReference type="ChEBI" id="CHEBI:15377"/>
        <dbReference type="ChEBI" id="CHEBI:17006"/>
        <dbReference type="ChEBI" id="CHEBI:28691"/>
    </reaction>
    <physiologicalReaction direction="left-to-right" evidence="2">
        <dbReference type="Rhea" id="RHEA:48225"/>
    </physiologicalReaction>
</comment>
<comment type="catalytic activity">
    <reaction evidence="2">
        <text>a neolactoside IV(2)-alpha-Fuc-nLc4Cer(d18:0) + H2O = a neolactoside nLc4Cer(d18:0) + L-fucose</text>
        <dbReference type="Rhea" id="RHEA:49308"/>
        <dbReference type="ChEBI" id="CHEBI:2181"/>
        <dbReference type="ChEBI" id="CHEBI:15377"/>
        <dbReference type="ChEBI" id="CHEBI:91119"/>
        <dbReference type="ChEBI" id="CHEBI:91121"/>
    </reaction>
    <physiologicalReaction direction="left-to-right" evidence="2">
        <dbReference type="Rhea" id="RHEA:49309"/>
    </physiologicalReaction>
</comment>
<comment type="subunit">
    <text evidence="1">Homotetramer.</text>
</comment>
<comment type="subcellular location">
    <subcellularLocation>
        <location evidence="2">Lysosome</location>
    </subcellularLocation>
</comment>
<comment type="similarity">
    <text evidence="5">Belongs to the glycosyl hydrolase 29 family.</text>
</comment>
<evidence type="ECO:0000250" key="1"/>
<evidence type="ECO:0000250" key="2">
    <source>
        <dbReference type="UniProtKB" id="P04066"/>
    </source>
</evidence>
<evidence type="ECO:0000255" key="3"/>
<evidence type="ECO:0000255" key="4">
    <source>
        <dbReference type="PROSITE-ProRule" id="PRU10054"/>
    </source>
</evidence>
<evidence type="ECO:0000305" key="5"/>
<name>FUCO_BOVIN</name>
<protein>
    <recommendedName>
        <fullName>Tissue alpha-L-fucosidase</fullName>
        <ecNumber>3.2.1.51</ecNumber>
    </recommendedName>
    <alternativeName>
        <fullName>Alpha-L-fucosidase I</fullName>
    </alternativeName>
    <alternativeName>
        <fullName>Alpha-L-fucoside fucohydrolase 1</fullName>
        <shortName>Alpha-L-fucosidase 1</shortName>
    </alternativeName>
</protein>
<feature type="signal peptide" evidence="3">
    <location>
        <begin position="1"/>
        <end position="22"/>
    </location>
</feature>
<feature type="chain" id="PRO_0000281855" description="Tissue alpha-L-fucosidase">
    <location>
        <begin position="23"/>
        <end position="468"/>
    </location>
</feature>
<feature type="site" description="May be important for catalysis" evidence="4">
    <location>
        <position position="299"/>
    </location>
</feature>
<feature type="modified residue" description="Phosphothreonine" evidence="2">
    <location>
        <position position="173"/>
    </location>
</feature>
<feature type="glycosylation site" description="N-linked (GlcNAc...) asparagine" evidence="3">
    <location>
        <position position="244"/>
    </location>
</feature>
<feature type="glycosylation site" description="N-linked (GlcNAc...) asparagine" evidence="3">
    <location>
        <position position="271"/>
    </location>
</feature>
<feature type="glycosylation site" description="N-linked (GlcNAc...) asparagine" evidence="3">
    <location>
        <position position="320"/>
    </location>
</feature>
<organism>
    <name type="scientific">Bos taurus</name>
    <name type="common">Bovine</name>
    <dbReference type="NCBI Taxonomy" id="9913"/>
    <lineage>
        <taxon>Eukaryota</taxon>
        <taxon>Metazoa</taxon>
        <taxon>Chordata</taxon>
        <taxon>Craniata</taxon>
        <taxon>Vertebrata</taxon>
        <taxon>Euteleostomi</taxon>
        <taxon>Mammalia</taxon>
        <taxon>Eutheria</taxon>
        <taxon>Laurasiatheria</taxon>
        <taxon>Artiodactyla</taxon>
        <taxon>Ruminantia</taxon>
        <taxon>Pecora</taxon>
        <taxon>Bovidae</taxon>
        <taxon>Bovinae</taxon>
        <taxon>Bos</taxon>
    </lineage>
</organism>
<accession>Q2KIM0</accession>
<sequence>MRSWVVGARLLLLLQLVLVLGAVRLPPCTDPRHCTDPPRYTPDWPSLDSRPLPAWFDEAKFGVFVHWGVFSVPAWGSEWFWWHWQGEKLPQYESFMKENYPPDFSYADFGPRFTARFFNPDSWADLFKAAGAKYVVLTTKHHEGYTNWPSPVSWNWNSKDVGPHRDLVGELGTAIRKRNIRYGLYHSLLEWFHPLYLRDKKNGFKTQYFVNAKTMPELYDLVNRYKPDLIWSDGEWECPDTYWNSTDFLAWLYNDSPVKDEVVVNDRWGQNCSCHHGGYYNCKDKFQPETLPDHKWEMCTSIDQRSWGYRRDMEMADITNESTIISELVQTVSLGGNYLLNVGPTKDGLIVPIFQERLLAVGKWLSINGEAIYASKPWRVQSEKNSVWYTSKGLAVYAILLHWPEYGILSLISPIATSTTKVTMLGIQKDLKWSLNPSGKGLLVFLPQLPPAALPTEFAWTIKLTGVK</sequence>
<keyword id="KW-0325">Glycoprotein</keyword>
<keyword id="KW-0326">Glycosidase</keyword>
<keyword id="KW-0378">Hydrolase</keyword>
<keyword id="KW-0443">Lipid metabolism</keyword>
<keyword id="KW-0458">Lysosome</keyword>
<keyword id="KW-0597">Phosphoprotein</keyword>
<keyword id="KW-1185">Reference proteome</keyword>
<keyword id="KW-0732">Signal</keyword>
<proteinExistence type="evidence at transcript level"/>
<dbReference type="EC" id="3.2.1.51"/>
<dbReference type="EMBL" id="BC112588">
    <property type="protein sequence ID" value="AAI12589.1"/>
    <property type="molecule type" value="mRNA"/>
</dbReference>
<dbReference type="RefSeq" id="NP_001039500.1">
    <property type="nucleotide sequence ID" value="NM_001046035.2"/>
</dbReference>
<dbReference type="SMR" id="Q2KIM0"/>
<dbReference type="FunCoup" id="Q2KIM0">
    <property type="interactions" value="434"/>
</dbReference>
<dbReference type="STRING" id="9913.ENSBTAP00000040572"/>
<dbReference type="BindingDB" id="Q2KIM0"/>
<dbReference type="ChEMBL" id="CHEMBL3545"/>
<dbReference type="CAZy" id="GH29">
    <property type="family name" value="Glycoside Hydrolase Family 29"/>
</dbReference>
<dbReference type="GlyCosmos" id="Q2KIM0">
    <property type="glycosylation" value="3 sites, No reported glycans"/>
</dbReference>
<dbReference type="GlyGen" id="Q2KIM0">
    <property type="glycosylation" value="3 sites"/>
</dbReference>
<dbReference type="PaxDb" id="9913-ENSBTAP00000040572"/>
<dbReference type="PeptideAtlas" id="Q2KIM0"/>
<dbReference type="Ensembl" id="ENSBTAT00000042970.2">
    <property type="protein sequence ID" value="ENSBTAP00000040572.1"/>
    <property type="gene ID" value="ENSBTAG00000030434.3"/>
</dbReference>
<dbReference type="GeneID" id="509522"/>
<dbReference type="KEGG" id="bta:509522"/>
<dbReference type="CTD" id="2517"/>
<dbReference type="VEuPathDB" id="HostDB:ENSBTAG00000030434"/>
<dbReference type="VGNC" id="VGNC:29140">
    <property type="gene designation" value="FUCA1"/>
</dbReference>
<dbReference type="eggNOG" id="KOG3340">
    <property type="taxonomic scope" value="Eukaryota"/>
</dbReference>
<dbReference type="GeneTree" id="ENSGT00440000035378"/>
<dbReference type="HOGENOM" id="CLU_002934_1_1_1"/>
<dbReference type="InParanoid" id="Q2KIM0"/>
<dbReference type="OMA" id="LPEHKWE"/>
<dbReference type="OrthoDB" id="6039950at2759"/>
<dbReference type="TreeFam" id="TF313034"/>
<dbReference type="Reactome" id="R-BTA-6798695">
    <property type="pathway name" value="Neutrophil degranulation"/>
</dbReference>
<dbReference type="Reactome" id="R-BTA-975578">
    <property type="pathway name" value="Reactions specific to the complex N-glycan synthesis pathway"/>
</dbReference>
<dbReference type="PRO" id="PR:Q2KIM0"/>
<dbReference type="Proteomes" id="UP000009136">
    <property type="component" value="Chromosome 2"/>
</dbReference>
<dbReference type="Bgee" id="ENSBTAG00000030434">
    <property type="expression patterns" value="Expressed in corpus epididymis and 105 other cell types or tissues"/>
</dbReference>
<dbReference type="GO" id="GO:0005764">
    <property type="term" value="C:lysosome"/>
    <property type="evidence" value="ECO:0000318"/>
    <property type="project" value="GO_Central"/>
</dbReference>
<dbReference type="GO" id="GO:0016020">
    <property type="term" value="C:membrane"/>
    <property type="evidence" value="ECO:0007669"/>
    <property type="project" value="GOC"/>
</dbReference>
<dbReference type="GO" id="GO:0004560">
    <property type="term" value="F:alpha-L-fucosidase activity"/>
    <property type="evidence" value="ECO:0000314"/>
    <property type="project" value="BHF-UCL"/>
</dbReference>
<dbReference type="GO" id="GO:0006004">
    <property type="term" value="P:fucose metabolic process"/>
    <property type="evidence" value="ECO:0000318"/>
    <property type="project" value="GO_Central"/>
</dbReference>
<dbReference type="GO" id="GO:0019377">
    <property type="term" value="P:glycolipid catabolic process"/>
    <property type="evidence" value="ECO:0000314"/>
    <property type="project" value="BHF-UCL"/>
</dbReference>
<dbReference type="GO" id="GO:0016139">
    <property type="term" value="P:glycoside catabolic process"/>
    <property type="evidence" value="ECO:0000318"/>
    <property type="project" value="GO_Central"/>
</dbReference>
<dbReference type="FunFam" id="2.60.40.1180:FF:000013">
    <property type="entry name" value="Alpha-L-fucosidase"/>
    <property type="match status" value="1"/>
</dbReference>
<dbReference type="FunFam" id="3.20.20.80:FF:000027">
    <property type="entry name" value="Alpha-L-fucosidase"/>
    <property type="match status" value="1"/>
</dbReference>
<dbReference type="Gene3D" id="3.20.20.80">
    <property type="entry name" value="Glycosidases"/>
    <property type="match status" value="1"/>
</dbReference>
<dbReference type="Gene3D" id="2.60.40.1180">
    <property type="entry name" value="Golgi alpha-mannosidase II"/>
    <property type="match status" value="1"/>
</dbReference>
<dbReference type="InterPro" id="IPR016286">
    <property type="entry name" value="FUC_metazoa-typ"/>
</dbReference>
<dbReference type="InterPro" id="IPR031919">
    <property type="entry name" value="Fucosidase_C"/>
</dbReference>
<dbReference type="InterPro" id="IPR000933">
    <property type="entry name" value="Glyco_hydro_29"/>
</dbReference>
<dbReference type="InterPro" id="IPR018526">
    <property type="entry name" value="Glyco_hydro_29_CS"/>
</dbReference>
<dbReference type="InterPro" id="IPR013780">
    <property type="entry name" value="Glyco_hydro_b"/>
</dbReference>
<dbReference type="InterPro" id="IPR017853">
    <property type="entry name" value="Glycoside_hydrolase_SF"/>
</dbReference>
<dbReference type="PANTHER" id="PTHR10030">
    <property type="entry name" value="ALPHA-L-FUCOSIDASE"/>
    <property type="match status" value="1"/>
</dbReference>
<dbReference type="PANTHER" id="PTHR10030:SF2">
    <property type="entry name" value="TISSUE ALPHA-L-FUCOSIDASE"/>
    <property type="match status" value="1"/>
</dbReference>
<dbReference type="Pfam" id="PF01120">
    <property type="entry name" value="Alpha_L_fucos"/>
    <property type="match status" value="1"/>
</dbReference>
<dbReference type="Pfam" id="PF16757">
    <property type="entry name" value="Fucosidase_C"/>
    <property type="match status" value="1"/>
</dbReference>
<dbReference type="PIRSF" id="PIRSF001092">
    <property type="entry name" value="Alpha-L-fucosidase"/>
    <property type="match status" value="1"/>
</dbReference>
<dbReference type="PRINTS" id="PR00741">
    <property type="entry name" value="GLHYDRLASE29"/>
</dbReference>
<dbReference type="SMART" id="SM00812">
    <property type="entry name" value="Alpha_L_fucos"/>
    <property type="match status" value="1"/>
</dbReference>
<dbReference type="SUPFAM" id="SSF51445">
    <property type="entry name" value="(Trans)glycosidases"/>
    <property type="match status" value="1"/>
</dbReference>
<dbReference type="PROSITE" id="PS00385">
    <property type="entry name" value="ALPHA_L_FUCOSIDASE"/>
    <property type="match status" value="1"/>
</dbReference>